<name>PKSF3_CANSA</name>
<comment type="function">
    <text evidence="1">Polyketide synthase responsible for the biosynthesis of secondary metabolites.</text>
</comment>
<comment type="subcellular location">
    <subcellularLocation>
        <location evidence="4">Cytoplasm</location>
    </subcellularLocation>
</comment>
<comment type="tissue specificity">
    <text evidence="3">Expressed in male and female flowers, and seedlings.</text>
</comment>
<comment type="similarity">
    <text evidence="4">Belongs to the thiolase-like superfamily. Chalcone/stilbene synthases family.</text>
</comment>
<organism>
    <name type="scientific">Cannabis sativa</name>
    <name type="common">Hemp</name>
    <name type="synonym">Marijuana</name>
    <dbReference type="NCBI Taxonomy" id="3483"/>
    <lineage>
        <taxon>Eukaryota</taxon>
        <taxon>Viridiplantae</taxon>
        <taxon>Streptophyta</taxon>
        <taxon>Embryophyta</taxon>
        <taxon>Tracheophyta</taxon>
        <taxon>Spermatophyta</taxon>
        <taxon>Magnoliopsida</taxon>
        <taxon>eudicotyledons</taxon>
        <taxon>Gunneridae</taxon>
        <taxon>Pentapetalae</taxon>
        <taxon>rosids</taxon>
        <taxon>fabids</taxon>
        <taxon>Rosales</taxon>
        <taxon>Cannabaceae</taxon>
        <taxon>Cannabis</taxon>
    </lineage>
</organism>
<reference key="1">
    <citation type="journal article" date="2010" name="Genet. Mol. Biol.">
        <title>In silicio expression analysis of PKS genes isolated from Cannabis sativa L.</title>
        <authorList>
            <person name="Flores-Sanchez I.J."/>
            <person name="Linthorst H.J."/>
            <person name="Verpoorte R."/>
        </authorList>
    </citation>
    <scope>NUCLEOTIDE SEQUENCE [MRNA]</scope>
    <scope>3D-STRUCTURE MODELING</scope>
    <scope>TISSUE SPECIFICITY</scope>
    <source>
        <strain>cv. Kompolti</strain>
    </source>
</reference>
<protein>
    <recommendedName>
        <fullName>Polyketide synthase 3</fullName>
        <ecNumber>2.3.1.-</ecNumber>
    </recommendedName>
</protein>
<feature type="chain" id="PRO_0000421150" description="Polyketide synthase 3">
    <location>
        <begin position="1"/>
        <end position="385"/>
    </location>
</feature>
<feature type="active site" evidence="2">
    <location>
        <position position="157"/>
    </location>
</feature>
<sequence>MNHLRAEGPASVLAIGTANPENILIQDEFPDYYFRVTKSEHMTQLKEKFRKICDKSMIRKRNCFLNEEHLKQNPRLVEHEMQTLDARQDMLVVEVPKLGKDACAKAIKEWGQPKSKITHLIFTSASTTDMPGADYHCAKLLGLSPSVKRVMMYQLGCYGGGTVLRIAKDIAENNKGARVLAVCCDIMACLFRGPSDSDLELLVGQAIFGDGAAAVIVGAEPDESVGERPIFELVSTGQTILPNSEGTIGGHIREAGLIFDLHKDVPMLISNNIEKCLIEAFTPIGISDWNSIFWITHPGGKAILDKVEEKLHLKSDKFVDSRHVLSEHGNMSSSTVLFVMDELRKRSLEEGKSTTGDGFEWGVLFGFGPGLTVERVVVRSVPIKY</sequence>
<keyword id="KW-0012">Acyltransferase</keyword>
<keyword id="KW-0963">Cytoplasm</keyword>
<keyword id="KW-0808">Transferase</keyword>
<proteinExistence type="evidence at transcript level"/>
<evidence type="ECO:0000250" key="1"/>
<evidence type="ECO:0000255" key="2">
    <source>
        <dbReference type="PROSITE-ProRule" id="PRU10023"/>
    </source>
</evidence>
<evidence type="ECO:0000269" key="3">
    <source>
    </source>
</evidence>
<evidence type="ECO:0000305" key="4"/>
<accession>F1LKH5</accession>
<dbReference type="EC" id="2.3.1.-"/>
<dbReference type="EMBL" id="EU551162">
    <property type="protein sequence ID" value="ACD76852.1"/>
    <property type="molecule type" value="mRNA"/>
</dbReference>
<dbReference type="SMR" id="F1LKH5"/>
<dbReference type="Proteomes" id="UP000596661">
    <property type="component" value="Unplaced"/>
</dbReference>
<dbReference type="GO" id="GO:0005737">
    <property type="term" value="C:cytoplasm"/>
    <property type="evidence" value="ECO:0007669"/>
    <property type="project" value="UniProtKB-SubCell"/>
</dbReference>
<dbReference type="GO" id="GO:0016747">
    <property type="term" value="F:acyltransferase activity, transferring groups other than amino-acyl groups"/>
    <property type="evidence" value="ECO:0007669"/>
    <property type="project" value="InterPro"/>
</dbReference>
<dbReference type="GO" id="GO:0030639">
    <property type="term" value="P:polyketide biosynthetic process"/>
    <property type="evidence" value="ECO:0007669"/>
    <property type="project" value="TreeGrafter"/>
</dbReference>
<dbReference type="CDD" id="cd00831">
    <property type="entry name" value="CHS_like"/>
    <property type="match status" value="1"/>
</dbReference>
<dbReference type="FunFam" id="3.40.47.10:FF:000014">
    <property type="entry name" value="Chalcone synthase 1"/>
    <property type="match status" value="1"/>
</dbReference>
<dbReference type="FunFam" id="3.40.47.10:FF:000025">
    <property type="entry name" value="Chalcone synthase 2"/>
    <property type="match status" value="1"/>
</dbReference>
<dbReference type="Gene3D" id="3.40.47.10">
    <property type="match status" value="2"/>
</dbReference>
<dbReference type="InterPro" id="IPR012328">
    <property type="entry name" value="Chalcone/stilbene_synt_C"/>
</dbReference>
<dbReference type="InterPro" id="IPR001099">
    <property type="entry name" value="Chalcone/stilbene_synt_N"/>
</dbReference>
<dbReference type="InterPro" id="IPR018088">
    <property type="entry name" value="Chalcone/stilbene_synthase_AS"/>
</dbReference>
<dbReference type="InterPro" id="IPR011141">
    <property type="entry name" value="Polyketide_synthase_type-III"/>
</dbReference>
<dbReference type="InterPro" id="IPR016039">
    <property type="entry name" value="Thiolase-like"/>
</dbReference>
<dbReference type="PANTHER" id="PTHR11877:SF14">
    <property type="entry name" value="CHALCONE SYNTHASE"/>
    <property type="match status" value="1"/>
</dbReference>
<dbReference type="PANTHER" id="PTHR11877">
    <property type="entry name" value="HYDROXYMETHYLGLUTARYL-COA SYNTHASE"/>
    <property type="match status" value="1"/>
</dbReference>
<dbReference type="Pfam" id="PF02797">
    <property type="entry name" value="Chal_sti_synt_C"/>
    <property type="match status" value="1"/>
</dbReference>
<dbReference type="Pfam" id="PF00195">
    <property type="entry name" value="Chal_sti_synt_N"/>
    <property type="match status" value="1"/>
</dbReference>
<dbReference type="PIRSF" id="PIRSF000451">
    <property type="entry name" value="PKS_III"/>
    <property type="match status" value="1"/>
</dbReference>
<dbReference type="SUPFAM" id="SSF53901">
    <property type="entry name" value="Thiolase-like"/>
    <property type="match status" value="2"/>
</dbReference>
<dbReference type="PROSITE" id="PS00441">
    <property type="entry name" value="CHALCONE_SYNTH"/>
    <property type="match status" value="1"/>
</dbReference>
<gene>
    <name type="primary">PKSF3</name>
</gene>